<feature type="chain" id="PRO_0000264444" description="UDP-3-O-acylglucosamine N-acyltransferase">
    <location>
        <begin position="1"/>
        <end position="347"/>
    </location>
</feature>
<feature type="active site" description="Proton acceptor" evidence="1">
    <location>
        <position position="248"/>
    </location>
</feature>
<keyword id="KW-0012">Acyltransferase</keyword>
<keyword id="KW-0441">Lipid A biosynthesis</keyword>
<keyword id="KW-0444">Lipid biosynthesis</keyword>
<keyword id="KW-0443">Lipid metabolism</keyword>
<keyword id="KW-1185">Reference proteome</keyword>
<keyword id="KW-0677">Repeat</keyword>
<keyword id="KW-0808">Transferase</keyword>
<gene>
    <name evidence="1" type="primary">lpxD</name>
    <name type="ordered locus">Syncc9902_0787</name>
</gene>
<evidence type="ECO:0000255" key="1">
    <source>
        <dbReference type="HAMAP-Rule" id="MF_00523"/>
    </source>
</evidence>
<protein>
    <recommendedName>
        <fullName evidence="1">UDP-3-O-acylglucosamine N-acyltransferase</fullName>
        <ecNumber evidence="1">2.3.1.191</ecNumber>
    </recommendedName>
</protein>
<accession>Q3AYS2</accession>
<reference key="1">
    <citation type="submission" date="2005-08" db="EMBL/GenBank/DDBJ databases">
        <title>Complete sequence of Synechococcus sp. CC9902.</title>
        <authorList>
            <person name="Copeland A."/>
            <person name="Lucas S."/>
            <person name="Lapidus A."/>
            <person name="Barry K."/>
            <person name="Detter J.C."/>
            <person name="Glavina T."/>
            <person name="Hammon N."/>
            <person name="Israni S."/>
            <person name="Pitluck S."/>
            <person name="Martinez M."/>
            <person name="Schmutz J."/>
            <person name="Larimer F."/>
            <person name="Land M."/>
            <person name="Kyrpides N."/>
            <person name="Ivanova N."/>
            <person name="Richardson P."/>
        </authorList>
    </citation>
    <scope>NUCLEOTIDE SEQUENCE [LARGE SCALE GENOMIC DNA]</scope>
    <source>
        <strain>CC9902</strain>
    </source>
</reference>
<organism>
    <name type="scientific">Synechococcus sp. (strain CC9902)</name>
    <dbReference type="NCBI Taxonomy" id="316279"/>
    <lineage>
        <taxon>Bacteria</taxon>
        <taxon>Bacillati</taxon>
        <taxon>Cyanobacteriota</taxon>
        <taxon>Cyanophyceae</taxon>
        <taxon>Synechococcales</taxon>
        <taxon>Synechococcaceae</taxon>
        <taxon>Synechococcus</taxon>
    </lineage>
</organism>
<comment type="function">
    <text evidence="1">Catalyzes the N-acylation of UDP-3-O-acylglucosamine using 3-hydroxyacyl-ACP as the acyl donor. Is involved in the biosynthesis of lipid A, a phosphorylated glycolipid that anchors the lipopolysaccharide to the outer membrane of the cell.</text>
</comment>
<comment type="catalytic activity">
    <reaction evidence="1">
        <text>a UDP-3-O-[(3R)-3-hydroxyacyl]-alpha-D-glucosamine + a (3R)-hydroxyacyl-[ACP] = a UDP-2-N,3-O-bis[(3R)-3-hydroxyacyl]-alpha-D-glucosamine + holo-[ACP] + H(+)</text>
        <dbReference type="Rhea" id="RHEA:53836"/>
        <dbReference type="Rhea" id="RHEA-COMP:9685"/>
        <dbReference type="Rhea" id="RHEA-COMP:9945"/>
        <dbReference type="ChEBI" id="CHEBI:15378"/>
        <dbReference type="ChEBI" id="CHEBI:64479"/>
        <dbReference type="ChEBI" id="CHEBI:78827"/>
        <dbReference type="ChEBI" id="CHEBI:137740"/>
        <dbReference type="ChEBI" id="CHEBI:137748"/>
        <dbReference type="EC" id="2.3.1.191"/>
    </reaction>
</comment>
<comment type="pathway">
    <text evidence="1">Bacterial outer membrane biogenesis; LPS lipid A biosynthesis.</text>
</comment>
<comment type="subunit">
    <text evidence="1">Homotrimer.</text>
</comment>
<comment type="similarity">
    <text evidence="1">Belongs to the transferase hexapeptide repeat family. LpxD subfamily.</text>
</comment>
<proteinExistence type="inferred from homology"/>
<name>LPXD_SYNS9</name>
<sequence>MRFSTLLKDLQTGEAELRWSQCGADPILAGAASLEQAKGDQLSFLEKGNALIAALTETGAGALLLPDQPDLIQCASERGIAFAVLANPRLAFAEALERLHPRLRPLAEIHPSAVVDERAVVGPGTFIAPRVCIGASSRIGANCIVHPGVVIYDDVEVGEGCELHANAVLHPGSRLGRGCVVNSNAVIGSEGFGFVPTPRGWRKMPQTGQVVLEDGVEVGCGSTIDRPSVGETRIGAGSKIDNLVQIGHGVTTGRGCALASQVGIAGGAKLGHGVILAGQVGVANRAVVGDGAIASSKSGIHGEVAPGEVVSGYPAIPNRLWLRCSAAFSKLPEMAKTLRELKRDISQ</sequence>
<dbReference type="EC" id="2.3.1.191" evidence="1"/>
<dbReference type="EMBL" id="CP000097">
    <property type="protein sequence ID" value="ABB25755.1"/>
    <property type="molecule type" value="Genomic_DNA"/>
</dbReference>
<dbReference type="RefSeq" id="WP_011359595.1">
    <property type="nucleotide sequence ID" value="NC_007513.1"/>
</dbReference>
<dbReference type="SMR" id="Q3AYS2"/>
<dbReference type="STRING" id="316279.Syncc9902_0787"/>
<dbReference type="KEGG" id="sye:Syncc9902_0787"/>
<dbReference type="eggNOG" id="COG1044">
    <property type="taxonomic scope" value="Bacteria"/>
</dbReference>
<dbReference type="HOGENOM" id="CLU_049865_0_0_3"/>
<dbReference type="OrthoDB" id="9784739at2"/>
<dbReference type="UniPathway" id="UPA00973"/>
<dbReference type="Proteomes" id="UP000002712">
    <property type="component" value="Chromosome"/>
</dbReference>
<dbReference type="GO" id="GO:0031470">
    <property type="term" value="C:carboxysome"/>
    <property type="evidence" value="ECO:0007669"/>
    <property type="project" value="UniProtKB-ARBA"/>
</dbReference>
<dbReference type="GO" id="GO:0016020">
    <property type="term" value="C:membrane"/>
    <property type="evidence" value="ECO:0007669"/>
    <property type="project" value="GOC"/>
</dbReference>
<dbReference type="GO" id="GO:0016410">
    <property type="term" value="F:N-acyltransferase activity"/>
    <property type="evidence" value="ECO:0007669"/>
    <property type="project" value="InterPro"/>
</dbReference>
<dbReference type="GO" id="GO:0043886">
    <property type="term" value="F:structural constituent of carboxysome shell"/>
    <property type="evidence" value="ECO:0007669"/>
    <property type="project" value="UniProtKB-ARBA"/>
</dbReference>
<dbReference type="GO" id="GO:0009245">
    <property type="term" value="P:lipid A biosynthetic process"/>
    <property type="evidence" value="ECO:0007669"/>
    <property type="project" value="UniProtKB-UniRule"/>
</dbReference>
<dbReference type="CDD" id="cd03352">
    <property type="entry name" value="LbH_LpxD"/>
    <property type="match status" value="1"/>
</dbReference>
<dbReference type="Gene3D" id="2.160.10.10">
    <property type="entry name" value="Hexapeptide repeat proteins"/>
    <property type="match status" value="1"/>
</dbReference>
<dbReference type="Gene3D" id="3.40.1390.10">
    <property type="entry name" value="MurE/MurF, N-terminal domain"/>
    <property type="match status" value="1"/>
</dbReference>
<dbReference type="HAMAP" id="MF_00523">
    <property type="entry name" value="LpxD"/>
    <property type="match status" value="1"/>
</dbReference>
<dbReference type="InterPro" id="IPR001451">
    <property type="entry name" value="Hexapep"/>
</dbReference>
<dbReference type="InterPro" id="IPR007691">
    <property type="entry name" value="LpxD"/>
</dbReference>
<dbReference type="InterPro" id="IPR011004">
    <property type="entry name" value="Trimer_LpxA-like_sf"/>
</dbReference>
<dbReference type="InterPro" id="IPR020573">
    <property type="entry name" value="UDP_GlcNAc_AcTrfase_non-rep"/>
</dbReference>
<dbReference type="NCBIfam" id="TIGR01853">
    <property type="entry name" value="lipid_A_lpxD"/>
    <property type="match status" value="1"/>
</dbReference>
<dbReference type="NCBIfam" id="NF002060">
    <property type="entry name" value="PRK00892.1"/>
    <property type="match status" value="1"/>
</dbReference>
<dbReference type="PANTHER" id="PTHR43378">
    <property type="entry name" value="UDP-3-O-ACYLGLUCOSAMINE N-ACYLTRANSFERASE"/>
    <property type="match status" value="1"/>
</dbReference>
<dbReference type="PANTHER" id="PTHR43378:SF2">
    <property type="entry name" value="UDP-3-O-ACYLGLUCOSAMINE N-ACYLTRANSFERASE 1, MITOCHONDRIAL-RELATED"/>
    <property type="match status" value="1"/>
</dbReference>
<dbReference type="Pfam" id="PF00132">
    <property type="entry name" value="Hexapep"/>
    <property type="match status" value="1"/>
</dbReference>
<dbReference type="Pfam" id="PF04613">
    <property type="entry name" value="LpxD"/>
    <property type="match status" value="1"/>
</dbReference>
<dbReference type="SUPFAM" id="SSF51161">
    <property type="entry name" value="Trimeric LpxA-like enzymes"/>
    <property type="match status" value="1"/>
</dbReference>